<accession>Q5GRU5</accession>
<gene>
    <name evidence="1" type="primary">rpmH</name>
    <name type="ordered locus">Wbm0691</name>
</gene>
<proteinExistence type="inferred from homology"/>
<evidence type="ECO:0000255" key="1">
    <source>
        <dbReference type="HAMAP-Rule" id="MF_00391"/>
    </source>
</evidence>
<evidence type="ECO:0000305" key="2"/>
<sequence length="44" mass="5298">MKRTFQPKNLIRKRRHGFRSRMATRAGRKILNRRRSLGCKKLCA</sequence>
<protein>
    <recommendedName>
        <fullName evidence="1">Large ribosomal subunit protein bL34</fullName>
    </recommendedName>
    <alternativeName>
        <fullName evidence="2">50S ribosomal protein L34</fullName>
    </alternativeName>
</protein>
<dbReference type="EMBL" id="AE017321">
    <property type="protein sequence ID" value="AAW71279.1"/>
    <property type="molecule type" value="Genomic_DNA"/>
</dbReference>
<dbReference type="SMR" id="Q5GRU5"/>
<dbReference type="STRING" id="292805.Wbm0691"/>
<dbReference type="KEGG" id="wbm:Wbm0691"/>
<dbReference type="eggNOG" id="COG0230">
    <property type="taxonomic scope" value="Bacteria"/>
</dbReference>
<dbReference type="HOGENOM" id="CLU_129938_2_0_5"/>
<dbReference type="Proteomes" id="UP000000534">
    <property type="component" value="Chromosome"/>
</dbReference>
<dbReference type="GO" id="GO:1990904">
    <property type="term" value="C:ribonucleoprotein complex"/>
    <property type="evidence" value="ECO:0007669"/>
    <property type="project" value="UniProtKB-KW"/>
</dbReference>
<dbReference type="GO" id="GO:0005840">
    <property type="term" value="C:ribosome"/>
    <property type="evidence" value="ECO:0007669"/>
    <property type="project" value="UniProtKB-KW"/>
</dbReference>
<dbReference type="GO" id="GO:0003735">
    <property type="term" value="F:structural constituent of ribosome"/>
    <property type="evidence" value="ECO:0007669"/>
    <property type="project" value="InterPro"/>
</dbReference>
<dbReference type="GO" id="GO:0006412">
    <property type="term" value="P:translation"/>
    <property type="evidence" value="ECO:0007669"/>
    <property type="project" value="UniProtKB-UniRule"/>
</dbReference>
<dbReference type="FunFam" id="1.10.287.3980:FF:000001">
    <property type="entry name" value="Mitochondrial ribosomal protein L34"/>
    <property type="match status" value="1"/>
</dbReference>
<dbReference type="Gene3D" id="1.10.287.3980">
    <property type="match status" value="1"/>
</dbReference>
<dbReference type="HAMAP" id="MF_00391">
    <property type="entry name" value="Ribosomal_bL34"/>
    <property type="match status" value="1"/>
</dbReference>
<dbReference type="InterPro" id="IPR000271">
    <property type="entry name" value="Ribosomal_bL34"/>
</dbReference>
<dbReference type="InterPro" id="IPR020939">
    <property type="entry name" value="Ribosomal_bL34_CS"/>
</dbReference>
<dbReference type="NCBIfam" id="TIGR01030">
    <property type="entry name" value="rpmH_bact"/>
    <property type="match status" value="1"/>
</dbReference>
<dbReference type="PANTHER" id="PTHR14503:SF4">
    <property type="entry name" value="LARGE RIBOSOMAL SUBUNIT PROTEIN BL34M"/>
    <property type="match status" value="1"/>
</dbReference>
<dbReference type="PANTHER" id="PTHR14503">
    <property type="entry name" value="MITOCHONDRIAL RIBOSOMAL PROTEIN 34 FAMILY MEMBER"/>
    <property type="match status" value="1"/>
</dbReference>
<dbReference type="Pfam" id="PF00468">
    <property type="entry name" value="Ribosomal_L34"/>
    <property type="match status" value="1"/>
</dbReference>
<dbReference type="PROSITE" id="PS00784">
    <property type="entry name" value="RIBOSOMAL_L34"/>
    <property type="match status" value="1"/>
</dbReference>
<keyword id="KW-1185">Reference proteome</keyword>
<keyword id="KW-0687">Ribonucleoprotein</keyword>
<keyword id="KW-0689">Ribosomal protein</keyword>
<comment type="similarity">
    <text evidence="1">Belongs to the bacterial ribosomal protein bL34 family.</text>
</comment>
<organism>
    <name type="scientific">Wolbachia sp. subsp. Brugia malayi (strain TRS)</name>
    <dbReference type="NCBI Taxonomy" id="292805"/>
    <lineage>
        <taxon>Bacteria</taxon>
        <taxon>Pseudomonadati</taxon>
        <taxon>Pseudomonadota</taxon>
        <taxon>Alphaproteobacteria</taxon>
        <taxon>Rickettsiales</taxon>
        <taxon>Anaplasmataceae</taxon>
        <taxon>Wolbachieae</taxon>
        <taxon>Wolbachia</taxon>
    </lineage>
</organism>
<reference key="1">
    <citation type="journal article" date="2005" name="PLoS Biol.">
        <title>The Wolbachia genome of Brugia malayi: endosymbiont evolution within a human pathogenic nematode.</title>
        <authorList>
            <person name="Foster J."/>
            <person name="Ganatra M."/>
            <person name="Kamal I."/>
            <person name="Ware J."/>
            <person name="Makarova K."/>
            <person name="Ivanova N."/>
            <person name="Bhattacharyya A."/>
            <person name="Kapatral V."/>
            <person name="Kumar S."/>
            <person name="Posfai J."/>
            <person name="Vincze T."/>
            <person name="Ingram J."/>
            <person name="Moran L."/>
            <person name="Lapidus A."/>
            <person name="Omelchenko M."/>
            <person name="Kyrpides N."/>
            <person name="Ghedin E."/>
            <person name="Wang S."/>
            <person name="Goltsman E."/>
            <person name="Joukov V."/>
            <person name="Ostrovskaya O."/>
            <person name="Tsukerman K."/>
            <person name="Mazur M."/>
            <person name="Comb D."/>
            <person name="Koonin E."/>
            <person name="Slatko B."/>
        </authorList>
    </citation>
    <scope>NUCLEOTIDE SEQUENCE [LARGE SCALE GENOMIC DNA]</scope>
    <source>
        <strain>TRS</strain>
    </source>
</reference>
<name>RL34_WOLTR</name>
<feature type="chain" id="PRO_0000187506" description="Large ribosomal subunit protein bL34">
    <location>
        <begin position="1"/>
        <end position="44"/>
    </location>
</feature>